<comment type="function">
    <text evidence="1">Catalyzes the conversion of (8S)-3',8-cyclo-7,8-dihydroguanosine 5'-triphosphate to cyclic pyranopterin monophosphate (cPMP).</text>
</comment>
<comment type="catalytic activity">
    <reaction evidence="1">
        <text>(8S)-3',8-cyclo-7,8-dihydroguanosine 5'-triphosphate = cyclic pyranopterin phosphate + diphosphate</text>
        <dbReference type="Rhea" id="RHEA:49580"/>
        <dbReference type="ChEBI" id="CHEBI:33019"/>
        <dbReference type="ChEBI" id="CHEBI:59648"/>
        <dbReference type="ChEBI" id="CHEBI:131766"/>
        <dbReference type="EC" id="4.6.1.17"/>
    </reaction>
</comment>
<comment type="pathway">
    <text evidence="1">Cofactor biosynthesis; molybdopterin biosynthesis.</text>
</comment>
<comment type="subunit">
    <text evidence="1">Homohexamer; trimer of dimers.</text>
</comment>
<comment type="similarity">
    <text evidence="1">Belongs to the MoaC family.</text>
</comment>
<reference key="1">
    <citation type="journal article" date="2004" name="Nucleic Acids Res.">
        <title>Thermoadaptation trait revealed by the genome sequence of thermophilic Geobacillus kaustophilus.</title>
        <authorList>
            <person name="Takami H."/>
            <person name="Takaki Y."/>
            <person name="Chee G.-J."/>
            <person name="Nishi S."/>
            <person name="Shimamura S."/>
            <person name="Suzuki H."/>
            <person name="Matsui S."/>
            <person name="Uchiyama I."/>
        </authorList>
    </citation>
    <scope>NUCLEOTIDE SEQUENCE [LARGE SCALE GENOMIC DNA]</scope>
    <source>
        <strain>HTA426</strain>
    </source>
</reference>
<reference key="2">
    <citation type="submission" date="2011-07" db="PDB data bank">
        <title>Structure of GK0241 protein from Geobacillus kaustophilus.</title>
        <authorList>
            <consortium name="RIKEN structural genomics initiative (RSGI)"/>
        </authorList>
    </citation>
    <scope>X-RAY CRYSTALLOGRAPHY (1.94 ANGSTROMS)</scope>
</reference>
<name>MOAC_GEOKA</name>
<feature type="chain" id="PRO_1000054095" description="Cyclic pyranopterin monophosphate synthase">
    <location>
        <begin position="1"/>
        <end position="162"/>
    </location>
</feature>
<feature type="active site" evidence="1">
    <location>
        <position position="130"/>
    </location>
</feature>
<feature type="binding site" evidence="1">
    <location>
        <begin position="75"/>
        <end position="77"/>
    </location>
    <ligand>
        <name>substrate</name>
    </ligand>
</feature>
<feature type="binding site" evidence="1">
    <location>
        <begin position="115"/>
        <end position="116"/>
    </location>
    <ligand>
        <name>substrate</name>
    </ligand>
</feature>
<feature type="strand" evidence="2">
    <location>
        <begin position="5"/>
        <end position="7"/>
    </location>
</feature>
<feature type="strand" evidence="2">
    <location>
        <begin position="11"/>
        <end position="13"/>
    </location>
</feature>
<feature type="strand" evidence="2">
    <location>
        <begin position="19"/>
        <end position="21"/>
    </location>
</feature>
<feature type="strand" evidence="2">
    <location>
        <begin position="24"/>
        <end position="36"/>
    </location>
</feature>
<feature type="helix" evidence="2">
    <location>
        <begin position="38"/>
        <end position="45"/>
    </location>
</feature>
<feature type="helix" evidence="2">
    <location>
        <begin position="54"/>
        <end position="72"/>
    </location>
</feature>
<feature type="strand" evidence="2">
    <location>
        <begin position="83"/>
        <end position="91"/>
    </location>
</feature>
<feature type="strand" evidence="2">
    <location>
        <begin position="93"/>
        <end position="111"/>
    </location>
</feature>
<feature type="helix" evidence="2">
    <location>
        <begin position="114"/>
        <end position="132"/>
    </location>
</feature>
<feature type="turn" evidence="2">
    <location>
        <begin position="133"/>
        <end position="135"/>
    </location>
</feature>
<feature type="strand" evidence="2">
    <location>
        <begin position="145"/>
        <end position="152"/>
    </location>
</feature>
<protein>
    <recommendedName>
        <fullName evidence="1">Cyclic pyranopterin monophosphate synthase</fullName>
        <ecNumber evidence="1">4.6.1.17</ecNumber>
    </recommendedName>
    <alternativeName>
        <fullName evidence="1">Molybdenum cofactor biosynthesis protein C</fullName>
    </alternativeName>
</protein>
<accession>Q5L3F4</accession>
<gene>
    <name evidence="1" type="primary">moaC</name>
    <name type="ordered locus">GK0241</name>
</gene>
<proteinExistence type="evidence at protein level"/>
<sequence length="162" mass="17467">MSSFTHFNEQGRAKMVDITHKEDTVRVAVAQTSVTVSREIYEKMTSNAIEKGDVLAVAQVAGVMAAKKTADLIPMCHPLMLKGVDIAFAWENDGEAHKLVITATVKTKGSTGVEMEALTAASVCALTVYDMCKALDKGMVIGPTYLVEKTGGKSGHYRRKTD</sequence>
<keyword id="KW-0002">3D-structure</keyword>
<keyword id="KW-0456">Lyase</keyword>
<keyword id="KW-0501">Molybdenum cofactor biosynthesis</keyword>
<keyword id="KW-1185">Reference proteome</keyword>
<organism>
    <name type="scientific">Geobacillus kaustophilus (strain HTA426)</name>
    <dbReference type="NCBI Taxonomy" id="235909"/>
    <lineage>
        <taxon>Bacteria</taxon>
        <taxon>Bacillati</taxon>
        <taxon>Bacillota</taxon>
        <taxon>Bacilli</taxon>
        <taxon>Bacillales</taxon>
        <taxon>Anoxybacillaceae</taxon>
        <taxon>Geobacillus</taxon>
        <taxon>Geobacillus thermoleovorans group</taxon>
    </lineage>
</organism>
<evidence type="ECO:0000255" key="1">
    <source>
        <dbReference type="HAMAP-Rule" id="MF_01224"/>
    </source>
</evidence>
<evidence type="ECO:0007829" key="2">
    <source>
        <dbReference type="PDB" id="2EEY"/>
    </source>
</evidence>
<dbReference type="EC" id="4.6.1.17" evidence="1"/>
<dbReference type="EMBL" id="BA000043">
    <property type="protein sequence ID" value="BAD74526.1"/>
    <property type="molecule type" value="Genomic_DNA"/>
</dbReference>
<dbReference type="RefSeq" id="WP_011229750.1">
    <property type="nucleotide sequence ID" value="NC_006510.1"/>
</dbReference>
<dbReference type="PDB" id="2EEY">
    <property type="method" value="X-ray"/>
    <property type="resolution" value="1.94 A"/>
    <property type="chains" value="A=1-162"/>
</dbReference>
<dbReference type="PDBsum" id="2EEY"/>
<dbReference type="SMR" id="Q5L3F4"/>
<dbReference type="STRING" id="235909.GK0241"/>
<dbReference type="GeneID" id="32062234"/>
<dbReference type="KEGG" id="gka:GK0241"/>
<dbReference type="eggNOG" id="COG0315">
    <property type="taxonomic scope" value="Bacteria"/>
</dbReference>
<dbReference type="HOGENOM" id="CLU_074693_1_1_9"/>
<dbReference type="UniPathway" id="UPA00344"/>
<dbReference type="EvolutionaryTrace" id="Q5L3F4"/>
<dbReference type="Proteomes" id="UP000001172">
    <property type="component" value="Chromosome"/>
</dbReference>
<dbReference type="GO" id="GO:0061799">
    <property type="term" value="F:cyclic pyranopterin monophosphate synthase activity"/>
    <property type="evidence" value="ECO:0007669"/>
    <property type="project" value="UniProtKB-UniRule"/>
</dbReference>
<dbReference type="GO" id="GO:0006777">
    <property type="term" value="P:Mo-molybdopterin cofactor biosynthetic process"/>
    <property type="evidence" value="ECO:0007669"/>
    <property type="project" value="UniProtKB-UniRule"/>
</dbReference>
<dbReference type="CDD" id="cd01420">
    <property type="entry name" value="MoaC_PE"/>
    <property type="match status" value="1"/>
</dbReference>
<dbReference type="Gene3D" id="3.30.70.640">
    <property type="entry name" value="Molybdopterin cofactor biosynthesis C (MoaC) domain"/>
    <property type="match status" value="1"/>
</dbReference>
<dbReference type="HAMAP" id="MF_01224_B">
    <property type="entry name" value="MoaC_B"/>
    <property type="match status" value="1"/>
</dbReference>
<dbReference type="InterPro" id="IPR023045">
    <property type="entry name" value="MoaC"/>
</dbReference>
<dbReference type="InterPro" id="IPR047594">
    <property type="entry name" value="MoaC_bact/euk"/>
</dbReference>
<dbReference type="InterPro" id="IPR036522">
    <property type="entry name" value="MoaC_sf"/>
</dbReference>
<dbReference type="InterPro" id="IPR050105">
    <property type="entry name" value="MoCo_biosynth_MoaA/MoaC"/>
</dbReference>
<dbReference type="InterPro" id="IPR002820">
    <property type="entry name" value="Mopterin_CF_biosynth-C_dom"/>
</dbReference>
<dbReference type="NCBIfam" id="TIGR00581">
    <property type="entry name" value="moaC"/>
    <property type="match status" value="1"/>
</dbReference>
<dbReference type="NCBIfam" id="NF006870">
    <property type="entry name" value="PRK09364.1"/>
    <property type="match status" value="1"/>
</dbReference>
<dbReference type="PANTHER" id="PTHR22960:SF29">
    <property type="entry name" value="CYCLIC PYRANOPTERIN MONOPHOSPHATE SYNTHASE"/>
    <property type="match status" value="1"/>
</dbReference>
<dbReference type="PANTHER" id="PTHR22960">
    <property type="entry name" value="MOLYBDOPTERIN COFACTOR SYNTHESIS PROTEIN A"/>
    <property type="match status" value="1"/>
</dbReference>
<dbReference type="Pfam" id="PF01967">
    <property type="entry name" value="MoaC"/>
    <property type="match status" value="1"/>
</dbReference>
<dbReference type="SUPFAM" id="SSF55040">
    <property type="entry name" value="Molybdenum cofactor biosynthesis protein C, MoaC"/>
    <property type="match status" value="1"/>
</dbReference>